<feature type="chain" id="PRO_1000007337" description="Large ribosomal subunit protein bL28">
    <location>
        <begin position="1"/>
        <end position="97"/>
    </location>
</feature>
<protein>
    <recommendedName>
        <fullName evidence="1">Large ribosomal subunit protein bL28</fullName>
    </recommendedName>
    <alternativeName>
        <fullName evidence="2">50S ribosomal protein L28</fullName>
    </alternativeName>
</protein>
<evidence type="ECO:0000255" key="1">
    <source>
        <dbReference type="HAMAP-Rule" id="MF_00373"/>
    </source>
</evidence>
<evidence type="ECO:0000305" key="2"/>
<sequence length="97" mass="10788">MSRKCELTGVGVLYGNNVSHSQRKTRRRFEPNLRSVKFISDITTAEYRLSVSARCISSVEKAGGFDAYMLKANNDALSTTAKAIKKKIIQTKMAKSL</sequence>
<gene>
    <name evidence="1" type="primary">rpmB</name>
    <name type="ordered locus">A1I_00470</name>
</gene>
<comment type="similarity">
    <text evidence="1">Belongs to the bacterial ribosomal protein bL28 family.</text>
</comment>
<dbReference type="EMBL" id="CP000849">
    <property type="protein sequence ID" value="ABV78500.1"/>
    <property type="molecule type" value="Genomic_DNA"/>
</dbReference>
<dbReference type="RefSeq" id="WP_011477930.1">
    <property type="nucleotide sequence ID" value="NC_009883.1"/>
</dbReference>
<dbReference type="SMR" id="A8GUK4"/>
<dbReference type="KEGG" id="rbo:A1I_00470"/>
<dbReference type="HOGENOM" id="CLU_064548_4_2_5"/>
<dbReference type="GO" id="GO:0022625">
    <property type="term" value="C:cytosolic large ribosomal subunit"/>
    <property type="evidence" value="ECO:0007669"/>
    <property type="project" value="TreeGrafter"/>
</dbReference>
<dbReference type="GO" id="GO:0003735">
    <property type="term" value="F:structural constituent of ribosome"/>
    <property type="evidence" value="ECO:0007669"/>
    <property type="project" value="InterPro"/>
</dbReference>
<dbReference type="GO" id="GO:0006412">
    <property type="term" value="P:translation"/>
    <property type="evidence" value="ECO:0007669"/>
    <property type="project" value="UniProtKB-UniRule"/>
</dbReference>
<dbReference type="Gene3D" id="2.30.170.40">
    <property type="entry name" value="Ribosomal protein L28/L24"/>
    <property type="match status" value="1"/>
</dbReference>
<dbReference type="HAMAP" id="MF_00373">
    <property type="entry name" value="Ribosomal_bL28"/>
    <property type="match status" value="1"/>
</dbReference>
<dbReference type="InterPro" id="IPR026569">
    <property type="entry name" value="Ribosomal_bL28"/>
</dbReference>
<dbReference type="InterPro" id="IPR034704">
    <property type="entry name" value="Ribosomal_bL28/bL31-like_sf"/>
</dbReference>
<dbReference type="InterPro" id="IPR001383">
    <property type="entry name" value="Ribosomal_bL28_bact-type"/>
</dbReference>
<dbReference type="InterPro" id="IPR037147">
    <property type="entry name" value="Ribosomal_bL28_sf"/>
</dbReference>
<dbReference type="NCBIfam" id="TIGR00009">
    <property type="entry name" value="L28"/>
    <property type="match status" value="1"/>
</dbReference>
<dbReference type="PANTHER" id="PTHR13528">
    <property type="entry name" value="39S RIBOSOMAL PROTEIN L28, MITOCHONDRIAL"/>
    <property type="match status" value="1"/>
</dbReference>
<dbReference type="PANTHER" id="PTHR13528:SF2">
    <property type="entry name" value="LARGE RIBOSOMAL SUBUNIT PROTEIN BL28M"/>
    <property type="match status" value="1"/>
</dbReference>
<dbReference type="Pfam" id="PF00830">
    <property type="entry name" value="Ribosomal_L28"/>
    <property type="match status" value="1"/>
</dbReference>
<dbReference type="SUPFAM" id="SSF143800">
    <property type="entry name" value="L28p-like"/>
    <property type="match status" value="1"/>
</dbReference>
<organism>
    <name type="scientific">Rickettsia bellii (strain OSU 85-389)</name>
    <dbReference type="NCBI Taxonomy" id="391896"/>
    <lineage>
        <taxon>Bacteria</taxon>
        <taxon>Pseudomonadati</taxon>
        <taxon>Pseudomonadota</taxon>
        <taxon>Alphaproteobacteria</taxon>
        <taxon>Rickettsiales</taxon>
        <taxon>Rickettsiaceae</taxon>
        <taxon>Rickettsieae</taxon>
        <taxon>Rickettsia</taxon>
        <taxon>belli group</taxon>
    </lineage>
</organism>
<name>RL28_RICB8</name>
<accession>A8GUK4</accession>
<keyword id="KW-0687">Ribonucleoprotein</keyword>
<keyword id="KW-0689">Ribosomal protein</keyword>
<reference key="1">
    <citation type="submission" date="2007-09" db="EMBL/GenBank/DDBJ databases">
        <title>Complete genome sequencing of Rickettsia bellii.</title>
        <authorList>
            <person name="Madan A."/>
            <person name="Lee H."/>
            <person name="Madan A."/>
            <person name="Yoon J.-G."/>
            <person name="Ryu G.-Y."/>
            <person name="Dasch G."/>
            <person name="Ereemeva M."/>
        </authorList>
    </citation>
    <scope>NUCLEOTIDE SEQUENCE [LARGE SCALE GENOMIC DNA]</scope>
    <source>
        <strain>OSU 85-389</strain>
    </source>
</reference>
<proteinExistence type="inferred from homology"/>